<gene>
    <name evidence="1" type="primary">gltX</name>
    <name type="ordered locus">BURPS668_2487</name>
</gene>
<protein>
    <recommendedName>
        <fullName evidence="1">Glutamate--tRNA ligase</fullName>
        <ecNumber evidence="1">6.1.1.17</ecNumber>
    </recommendedName>
    <alternativeName>
        <fullName evidence="1">Glutamyl-tRNA synthetase</fullName>
        <shortName evidence="1">GluRS</shortName>
    </alternativeName>
</protein>
<evidence type="ECO:0000255" key="1">
    <source>
        <dbReference type="HAMAP-Rule" id="MF_00022"/>
    </source>
</evidence>
<evidence type="ECO:0000256" key="2">
    <source>
        <dbReference type="SAM" id="MobiDB-lite"/>
    </source>
</evidence>
<evidence type="ECO:0000305" key="3"/>
<comment type="function">
    <text evidence="1">Catalyzes the attachment of glutamate to tRNA(Glu) in a two-step reaction: glutamate is first activated by ATP to form Glu-AMP and then transferred to the acceptor end of tRNA(Glu).</text>
</comment>
<comment type="catalytic activity">
    <reaction evidence="1">
        <text>tRNA(Glu) + L-glutamate + ATP = L-glutamyl-tRNA(Glu) + AMP + diphosphate</text>
        <dbReference type="Rhea" id="RHEA:23540"/>
        <dbReference type="Rhea" id="RHEA-COMP:9663"/>
        <dbReference type="Rhea" id="RHEA-COMP:9680"/>
        <dbReference type="ChEBI" id="CHEBI:29985"/>
        <dbReference type="ChEBI" id="CHEBI:30616"/>
        <dbReference type="ChEBI" id="CHEBI:33019"/>
        <dbReference type="ChEBI" id="CHEBI:78442"/>
        <dbReference type="ChEBI" id="CHEBI:78520"/>
        <dbReference type="ChEBI" id="CHEBI:456215"/>
        <dbReference type="EC" id="6.1.1.17"/>
    </reaction>
</comment>
<comment type="subunit">
    <text evidence="1">Monomer.</text>
</comment>
<comment type="subcellular location">
    <subcellularLocation>
        <location evidence="1">Cytoplasm</location>
    </subcellularLocation>
</comment>
<comment type="similarity">
    <text evidence="1">Belongs to the class-I aminoacyl-tRNA synthetase family. Glutamate--tRNA ligase type 1 subfamily.</text>
</comment>
<comment type="sequence caution" evidence="3">
    <conflict type="erroneous initiation">
        <sequence resource="EMBL-CDS" id="ABN84591"/>
    </conflict>
</comment>
<sequence length="469" mass="52147">MTRPVRTRFAPSPTGFIHLGNIRSALYPWAFARKMKGTFVLRIEDTDLERSTEASVDAILEGMAWLGLDYDEGPYYQMQRMDRYREVLAQMLEKDLVYPCYMSTEELDALRERQRAAGEKPRYDGTWRPEPGKVLPEPPAGVTPVLRFRNPLTGSVVWDDAVKGRVEISNEELDDLVIARPDGTPTYNFCVVVDDLDMGITHVIRGDDHVNNTPRQINILRALGGEVPVYAHLPTVLNEQGEKMSKRHGAMSVMGYRDAGYLPEAVLNYLARLGWSHGDAEIFSREQFVEWFDLEHLGKSPAQYDHNKLNWLNNHYIKEADDARLAELAKPFFAALGIDADAIARGPDLVGVMGLMKDRASTVKEIAENSTMFYRAPAPDAQALAQHVTDAVRPALAEFAAALKTAEWTKEAIAAALKAVLGAHKLKMPQLAMPVRLLVAGTTHTPSIDAVLLLFGRDVVVSRLAAALA</sequence>
<dbReference type="EC" id="6.1.1.17" evidence="1"/>
<dbReference type="EMBL" id="CP000570">
    <property type="protein sequence ID" value="ABN84591.1"/>
    <property type="status" value="ALT_INIT"/>
    <property type="molecule type" value="Genomic_DNA"/>
</dbReference>
<dbReference type="RefSeq" id="WP_038727524.1">
    <property type="nucleotide sequence ID" value="NC_009074.1"/>
</dbReference>
<dbReference type="SMR" id="A3NAZ3"/>
<dbReference type="KEGG" id="bpd:BURPS668_2487"/>
<dbReference type="HOGENOM" id="CLU_015768_6_0_4"/>
<dbReference type="GO" id="GO:0005829">
    <property type="term" value="C:cytosol"/>
    <property type="evidence" value="ECO:0007669"/>
    <property type="project" value="TreeGrafter"/>
</dbReference>
<dbReference type="GO" id="GO:0005524">
    <property type="term" value="F:ATP binding"/>
    <property type="evidence" value="ECO:0007669"/>
    <property type="project" value="UniProtKB-UniRule"/>
</dbReference>
<dbReference type="GO" id="GO:0004818">
    <property type="term" value="F:glutamate-tRNA ligase activity"/>
    <property type="evidence" value="ECO:0007669"/>
    <property type="project" value="UniProtKB-UniRule"/>
</dbReference>
<dbReference type="GO" id="GO:0000049">
    <property type="term" value="F:tRNA binding"/>
    <property type="evidence" value="ECO:0007669"/>
    <property type="project" value="InterPro"/>
</dbReference>
<dbReference type="GO" id="GO:0008270">
    <property type="term" value="F:zinc ion binding"/>
    <property type="evidence" value="ECO:0007669"/>
    <property type="project" value="InterPro"/>
</dbReference>
<dbReference type="GO" id="GO:0006424">
    <property type="term" value="P:glutamyl-tRNA aminoacylation"/>
    <property type="evidence" value="ECO:0007669"/>
    <property type="project" value="UniProtKB-UniRule"/>
</dbReference>
<dbReference type="CDD" id="cd00808">
    <property type="entry name" value="GluRS_core"/>
    <property type="match status" value="1"/>
</dbReference>
<dbReference type="FunFam" id="3.40.50.620:FF:000007">
    <property type="entry name" value="Glutamate--tRNA ligase"/>
    <property type="match status" value="1"/>
</dbReference>
<dbReference type="Gene3D" id="1.10.10.350">
    <property type="match status" value="1"/>
</dbReference>
<dbReference type="Gene3D" id="1.10.8.70">
    <property type="entry name" value="Glutamate-tRNA synthetase, class I, anticodon-binding domain 1"/>
    <property type="match status" value="1"/>
</dbReference>
<dbReference type="Gene3D" id="3.40.50.620">
    <property type="entry name" value="HUPs"/>
    <property type="match status" value="1"/>
</dbReference>
<dbReference type="HAMAP" id="MF_00022">
    <property type="entry name" value="Glu_tRNA_synth_type1"/>
    <property type="match status" value="1"/>
</dbReference>
<dbReference type="InterPro" id="IPR045462">
    <property type="entry name" value="aa-tRNA-synth_I_cd-bd"/>
</dbReference>
<dbReference type="InterPro" id="IPR020751">
    <property type="entry name" value="aa-tRNA-synth_I_codon-bd_sub2"/>
</dbReference>
<dbReference type="InterPro" id="IPR001412">
    <property type="entry name" value="aa-tRNA-synth_I_CS"/>
</dbReference>
<dbReference type="InterPro" id="IPR008925">
    <property type="entry name" value="aa_tRNA-synth_I_cd-bd_sf"/>
</dbReference>
<dbReference type="InterPro" id="IPR004527">
    <property type="entry name" value="Glu-tRNA-ligase_bac/mito"/>
</dbReference>
<dbReference type="InterPro" id="IPR020752">
    <property type="entry name" value="Glu-tRNA-synth_I_codon-bd_sub1"/>
</dbReference>
<dbReference type="InterPro" id="IPR000924">
    <property type="entry name" value="Glu/Gln-tRNA-synth"/>
</dbReference>
<dbReference type="InterPro" id="IPR020058">
    <property type="entry name" value="Glu/Gln-tRNA-synth_Ib_cat-dom"/>
</dbReference>
<dbReference type="InterPro" id="IPR049940">
    <property type="entry name" value="GluQ/Sye"/>
</dbReference>
<dbReference type="InterPro" id="IPR033910">
    <property type="entry name" value="GluRS_core"/>
</dbReference>
<dbReference type="InterPro" id="IPR014729">
    <property type="entry name" value="Rossmann-like_a/b/a_fold"/>
</dbReference>
<dbReference type="NCBIfam" id="TIGR00464">
    <property type="entry name" value="gltX_bact"/>
    <property type="match status" value="1"/>
</dbReference>
<dbReference type="PANTHER" id="PTHR43311">
    <property type="entry name" value="GLUTAMATE--TRNA LIGASE"/>
    <property type="match status" value="1"/>
</dbReference>
<dbReference type="PANTHER" id="PTHR43311:SF2">
    <property type="entry name" value="GLUTAMATE--TRNA LIGASE, MITOCHONDRIAL-RELATED"/>
    <property type="match status" value="1"/>
</dbReference>
<dbReference type="Pfam" id="PF19269">
    <property type="entry name" value="Anticodon_2"/>
    <property type="match status" value="1"/>
</dbReference>
<dbReference type="Pfam" id="PF00749">
    <property type="entry name" value="tRNA-synt_1c"/>
    <property type="match status" value="1"/>
</dbReference>
<dbReference type="PRINTS" id="PR00987">
    <property type="entry name" value="TRNASYNTHGLU"/>
</dbReference>
<dbReference type="SUPFAM" id="SSF48163">
    <property type="entry name" value="An anticodon-binding domain of class I aminoacyl-tRNA synthetases"/>
    <property type="match status" value="1"/>
</dbReference>
<dbReference type="SUPFAM" id="SSF52374">
    <property type="entry name" value="Nucleotidylyl transferase"/>
    <property type="match status" value="1"/>
</dbReference>
<dbReference type="PROSITE" id="PS00178">
    <property type="entry name" value="AA_TRNA_LIGASE_I"/>
    <property type="match status" value="1"/>
</dbReference>
<feature type="chain" id="PRO_0000367630" description="Glutamate--tRNA ligase">
    <location>
        <begin position="1"/>
        <end position="469"/>
    </location>
</feature>
<feature type="region of interest" description="Disordered" evidence="2">
    <location>
        <begin position="118"/>
        <end position="139"/>
    </location>
</feature>
<feature type="short sequence motif" description="'HIGH' region" evidence="1">
    <location>
        <begin position="11"/>
        <end position="21"/>
    </location>
</feature>
<feature type="short sequence motif" description="'KMSKS' region" evidence="1">
    <location>
        <begin position="243"/>
        <end position="247"/>
    </location>
</feature>
<feature type="compositionally biased region" description="Basic and acidic residues" evidence="2">
    <location>
        <begin position="118"/>
        <end position="131"/>
    </location>
</feature>
<feature type="binding site" evidence="1">
    <location>
        <position position="246"/>
    </location>
    <ligand>
        <name>ATP</name>
        <dbReference type="ChEBI" id="CHEBI:30616"/>
    </ligand>
</feature>
<accession>A3NAZ3</accession>
<reference key="1">
    <citation type="journal article" date="2010" name="Genome Biol. Evol.">
        <title>Continuing evolution of Burkholderia mallei through genome reduction and large-scale rearrangements.</title>
        <authorList>
            <person name="Losada L."/>
            <person name="Ronning C.M."/>
            <person name="DeShazer D."/>
            <person name="Woods D."/>
            <person name="Fedorova N."/>
            <person name="Kim H.S."/>
            <person name="Shabalina S.A."/>
            <person name="Pearson T.R."/>
            <person name="Brinkac L."/>
            <person name="Tan P."/>
            <person name="Nandi T."/>
            <person name="Crabtree J."/>
            <person name="Badger J."/>
            <person name="Beckstrom-Sternberg S."/>
            <person name="Saqib M."/>
            <person name="Schutzer S.E."/>
            <person name="Keim P."/>
            <person name="Nierman W.C."/>
        </authorList>
    </citation>
    <scope>NUCLEOTIDE SEQUENCE [LARGE SCALE GENOMIC DNA]</scope>
    <source>
        <strain>668</strain>
    </source>
</reference>
<name>SYE_BURP6</name>
<organism>
    <name type="scientific">Burkholderia pseudomallei (strain 668)</name>
    <dbReference type="NCBI Taxonomy" id="320373"/>
    <lineage>
        <taxon>Bacteria</taxon>
        <taxon>Pseudomonadati</taxon>
        <taxon>Pseudomonadota</taxon>
        <taxon>Betaproteobacteria</taxon>
        <taxon>Burkholderiales</taxon>
        <taxon>Burkholderiaceae</taxon>
        <taxon>Burkholderia</taxon>
        <taxon>pseudomallei group</taxon>
    </lineage>
</organism>
<keyword id="KW-0030">Aminoacyl-tRNA synthetase</keyword>
<keyword id="KW-0067">ATP-binding</keyword>
<keyword id="KW-0963">Cytoplasm</keyword>
<keyword id="KW-0436">Ligase</keyword>
<keyword id="KW-0547">Nucleotide-binding</keyword>
<keyword id="KW-0648">Protein biosynthesis</keyword>
<proteinExistence type="inferred from homology"/>